<comment type="RNA editing">
    <location>
        <position position="318" evidence="3"/>
    </location>
    <text>Partially edited. RNA editing at this position consists of an insertion of one or two guanine nucleotides. The sequence displayed here is the W protein, derived from the +2G edited RNA. The unedited RNA gives rise to the P protein (AC P04860), the +1G edited RNA gives rise to the V protein (AC P69282).</text>
</comment>
<comment type="miscellaneous">
    <text>The P/V/C gene has two overlapping open reading frames. One encodes the P/V/W proteins and the other the C/Y proteins.</text>
</comment>
<proteinExistence type="inferred from homology"/>
<name>W_SENDZ</name>
<dbReference type="EMBL" id="X00087">
    <property type="status" value="NOT_ANNOTATED_CDS"/>
    <property type="molecule type" value="Genomic_RNA"/>
</dbReference>
<dbReference type="Proteomes" id="UP000006560">
    <property type="component" value="Genome"/>
</dbReference>
<organism>
    <name type="scientific">Sendai virus (strain Z)</name>
    <name type="common">SeV</name>
    <name type="synonym">Sendai virus (strain HVJ)</name>
    <dbReference type="NCBI Taxonomy" id="11198"/>
    <lineage>
        <taxon>Viruses</taxon>
        <taxon>Riboviria</taxon>
        <taxon>Orthornavirae</taxon>
        <taxon>Negarnaviricota</taxon>
        <taxon>Haploviricotina</taxon>
        <taxon>Monjiviricetes</taxon>
        <taxon>Mononegavirales</taxon>
        <taxon>Paramyxoviridae</taxon>
        <taxon>Feraresvirinae</taxon>
        <taxon>Respirovirus</taxon>
        <taxon>Respirovirus muris</taxon>
    </lineage>
</organism>
<accession>P69283</accession>
<gene>
    <name type="primary">P/V/C</name>
</gene>
<protein>
    <recommendedName>
        <fullName>Protein W</fullName>
    </recommendedName>
</protein>
<keyword id="KW-0597">Phosphoprotein</keyword>
<keyword id="KW-0691">RNA editing</keyword>
<reference key="1">
    <citation type="journal article" date="1983" name="Nucleic Acids Res.">
        <title>Sequence of 3,687 nucleotides from the 3' end of Sendai virus genome RNA and the predicted amino acid sequences of viral NP, P and C proteins.</title>
        <authorList>
            <person name="Shioda T."/>
            <person name="Hidaka Y."/>
            <person name="Kanda T."/>
            <person name="Shibuta H."/>
            <person name="Nomoto A."/>
            <person name="Iwasaki K."/>
        </authorList>
    </citation>
    <scope>NUCLEOTIDE SEQUENCE [GENOMIC RNA]</scope>
</reference>
<reference key="2">
    <citation type="submission" date="1985-02" db="EMBL/GenBank/DDBJ databases">
        <authorList>
            <person name="Shibuta H."/>
        </authorList>
    </citation>
    <scope>NUCLEOTIDE SEQUENCE [GENOMIC RNA]</scope>
</reference>
<reference key="3">
    <citation type="journal article" date="1991" name="EMBO J.">
        <title>The Sendai virus P gene expresses both an essential protein and an inhibitor of RNA synthesis by shuffling modules via mRNA editing.</title>
        <authorList>
            <person name="Curran J."/>
            <person name="Boeck R."/>
            <person name="Kolakofsky D."/>
        </authorList>
    </citation>
    <scope>RNA EDITING</scope>
</reference>
<sequence length="318" mass="33567">MDQDAFILKEDSEVEREAPGGRESLSDVIGFLDAVLSSEPTDIGGDRSWLHNTINTPQGPGSAHRAKSEGEGEVSTPSTQDNRSGEESRVSGRTSKPEAEAHAGNLDKQNIHRAFGGRTGTNSVSQDLGDGGDSGILENPPNERGYPRSGIEDENREMAAHPDKRGEDQAEGLPEEVRGSTSLPDEGEGGASNNGRSMEPGSSHSARVTGVLVIPSPELEEAVLRRNKRRPTNSGSKPLTPATVPGTRSPPLNRYNSTGSPPGKPPSTQDEHINSGDTPAVRVKDRKPPIGTRSVSDCPANGRSIHPGLETDSTKKGA</sequence>
<feature type="chain" id="PRO_0000142837" description="Protein W">
    <location>
        <begin position="1"/>
        <end position="318"/>
    </location>
</feature>
<feature type="region of interest" description="Disordered" evidence="2">
    <location>
        <begin position="1"/>
        <end position="23"/>
    </location>
</feature>
<feature type="region of interest" description="Disordered" evidence="2">
    <location>
        <begin position="38"/>
        <end position="318"/>
    </location>
</feature>
<feature type="compositionally biased region" description="Basic and acidic residues" evidence="2">
    <location>
        <begin position="7"/>
        <end position="20"/>
    </location>
</feature>
<feature type="compositionally biased region" description="Polar residues" evidence="2">
    <location>
        <begin position="50"/>
        <end position="59"/>
    </location>
</feature>
<feature type="compositionally biased region" description="Basic and acidic residues" evidence="2">
    <location>
        <begin position="83"/>
        <end position="101"/>
    </location>
</feature>
<feature type="compositionally biased region" description="Basic and acidic residues" evidence="2">
    <location>
        <begin position="150"/>
        <end position="168"/>
    </location>
</feature>
<feature type="compositionally biased region" description="Polar residues" evidence="2">
    <location>
        <begin position="191"/>
        <end position="206"/>
    </location>
</feature>
<feature type="modified residue" description="Phosphoserine; by host" evidence="1">
    <location>
        <position position="68"/>
    </location>
</feature>
<feature type="modified residue" description="Phosphoserine; by host" evidence="1">
    <location>
        <position position="125"/>
    </location>
</feature>
<feature type="modified residue" description="Phosphoserine; by host" evidence="1">
    <location>
        <position position="192"/>
    </location>
</feature>
<feature type="modified residue" description="Phosphoserine; by host" evidence="1">
    <location>
        <position position="249"/>
    </location>
</feature>
<feature type="modified residue" description="Phosphoserine; by host" evidence="1">
    <location>
        <position position="257"/>
    </location>
</feature>
<feature type="modified residue" description="Phosphoserine; by host" evidence="1">
    <location>
        <position position="260"/>
    </location>
</feature>
<evidence type="ECO:0000250" key="1"/>
<evidence type="ECO:0000256" key="2">
    <source>
        <dbReference type="SAM" id="MobiDB-lite"/>
    </source>
</evidence>
<evidence type="ECO:0000269" key="3">
    <source>
    </source>
</evidence>
<organismHost>
    <name type="scientific">Cavia cutleri</name>
    <name type="common">Guinea pig</name>
    <dbReference type="NCBI Taxonomy" id="10144"/>
</organismHost>
<organismHost>
    <name type="scientific">Cricetidae sp.</name>
    <name type="common">Hamster</name>
    <dbReference type="NCBI Taxonomy" id="36483"/>
</organismHost>
<organismHost>
    <name type="scientific">Mus musculus</name>
    <name type="common">Mouse</name>
    <dbReference type="NCBI Taxonomy" id="10090"/>
</organismHost>
<organismHost>
    <name type="scientific">Rattus norvegicus</name>
    <name type="common">Rat</name>
    <dbReference type="NCBI Taxonomy" id="10116"/>
</organismHost>